<sequence>MAHRWLILALVAAAAPRALASPGPSLNERQSDDEPFSPPYYPAPNGGWVSTWAEAYEKAHSIVSNLTLAEKVNLTTGTGIFMGPCAGQTGSVPRLGIPNLCLHDSPLGVRNTDHNTAFPPGITVGATFDKSLMYERGVGLGEEARGKGVNVLLGPSVGPLGRKPRGGRNWEGFGFDPVLQGIGGAETIKGMQSTGLIACIKHFVGNEQEMHRMSSVVTQGYSSNIDDRTLHELYIWPFAEGVRAEVGSVMIAYNDVNKSSCSQNSKLINGVLKDELGFQGFVVTDWLAHYGGVSSALAGLDMDMPGDGAVPLFGNSYWGPELSRSILNGTVPVERLNDMVTRILATWYKMGQDQDYPLPNFSSNTEDEKGLLYPGAVISPIGVVNQYVNVQGNHNITARAIARDAITLLKNEGDLLPLRRNDSLKVFGTDAGPDPQGLNSCADKGCNRGVLTMGWGSGTSKLPYLITPQEAIANITPTAEFFITDSFPSSVDANDEDIAIVFINSDSGENYITVDGNPGDRKTSGLHAWHNGDELVKAAAERFSQVVVVIHTVGPIILEEWIDLDSVKAVLIAHLPGQEAGYSLTDVLFGDYSPSGHLPYTIPYQESNYPSSVGLLQQPFGQIQDYYTEGLYIDYRHFLKEDITPRYAFGHGLSYTTFEFSEPALSVVTPLDSAYPPSRPAKGPTPTYPNTIPPASEAAWPAKFNRIWRYIYPYLNNPQADAAVANSSKTYPYPDGYSTDPQPPPRAGGAEGGNPALWDVAFSVQVTVTNTGQHSGRAVAQLYVELPDSLGLDTPSRQLRQFEKTKVLETGQSETLTLEVTRKDVSVWDVEVQDWKTVVGGEGVKIHIGESVLDIRTECEVGGRCVTL</sequence>
<organism>
    <name type="scientific">Emericella nidulans (strain FGSC A4 / ATCC 38163 / CBS 112.46 / NRRL 194 / M139)</name>
    <name type="common">Aspergillus nidulans</name>
    <dbReference type="NCBI Taxonomy" id="227321"/>
    <lineage>
        <taxon>Eukaryota</taxon>
        <taxon>Fungi</taxon>
        <taxon>Dikarya</taxon>
        <taxon>Ascomycota</taxon>
        <taxon>Pezizomycotina</taxon>
        <taxon>Eurotiomycetes</taxon>
        <taxon>Eurotiomycetidae</taxon>
        <taxon>Eurotiales</taxon>
        <taxon>Aspergillaceae</taxon>
        <taxon>Aspergillus</taxon>
        <taxon>Aspergillus subgen. Nidulantes</taxon>
    </lineage>
</organism>
<gene>
    <name type="primary">bglF</name>
    <name type="ORF">AN10482</name>
</gene>
<dbReference type="EC" id="3.2.1.21"/>
<dbReference type="EMBL" id="AACD01000063">
    <property type="protein sequence ID" value="EAA58835.1"/>
    <property type="status" value="ALT_SEQ"/>
    <property type="molecule type" value="Genomic_DNA"/>
</dbReference>
<dbReference type="EMBL" id="BN001302">
    <property type="protein sequence ID" value="CBF75129.1"/>
    <property type="molecule type" value="Genomic_DNA"/>
</dbReference>
<dbReference type="RefSeq" id="XP_661508.1">
    <property type="nucleotide sequence ID" value="XM_656416.1"/>
</dbReference>
<dbReference type="SMR" id="Q5B6C6"/>
<dbReference type="STRING" id="227321.Q5B6C6"/>
<dbReference type="CAZy" id="GH3">
    <property type="family name" value="Glycoside Hydrolase Family 3"/>
</dbReference>
<dbReference type="GlyCosmos" id="Q5B6C6">
    <property type="glycosylation" value="8 sites, No reported glycans"/>
</dbReference>
<dbReference type="EnsemblFungi" id="CBF75129">
    <property type="protein sequence ID" value="CBF75129"/>
    <property type="gene ID" value="ANIA_10482"/>
</dbReference>
<dbReference type="VEuPathDB" id="FungiDB:AN10482"/>
<dbReference type="eggNOG" id="ENOG502QR4D">
    <property type="taxonomic scope" value="Eukaryota"/>
</dbReference>
<dbReference type="HOGENOM" id="CLU_007314_0_0_1"/>
<dbReference type="InParanoid" id="Q5B6C6"/>
<dbReference type="OMA" id="PAPYGGW"/>
<dbReference type="OrthoDB" id="416222at2759"/>
<dbReference type="UniPathway" id="UPA00696"/>
<dbReference type="Proteomes" id="UP000000560">
    <property type="component" value="Chromosome II"/>
</dbReference>
<dbReference type="GO" id="GO:0005576">
    <property type="term" value="C:extracellular region"/>
    <property type="evidence" value="ECO:0007669"/>
    <property type="project" value="UniProtKB-SubCell"/>
</dbReference>
<dbReference type="GO" id="GO:0008422">
    <property type="term" value="F:beta-glucosidase activity"/>
    <property type="evidence" value="ECO:0000318"/>
    <property type="project" value="GO_Central"/>
</dbReference>
<dbReference type="GO" id="GO:0030245">
    <property type="term" value="P:cellulose catabolic process"/>
    <property type="evidence" value="ECO:0007669"/>
    <property type="project" value="UniProtKB-UniPathway"/>
</dbReference>
<dbReference type="GO" id="GO:0009251">
    <property type="term" value="P:glucan catabolic process"/>
    <property type="evidence" value="ECO:0000318"/>
    <property type="project" value="GO_Central"/>
</dbReference>
<dbReference type="FunFam" id="3.20.20.300:FF:000002">
    <property type="entry name" value="Probable beta-glucosidase"/>
    <property type="match status" value="1"/>
</dbReference>
<dbReference type="FunFam" id="3.40.50.1700:FF:000003">
    <property type="entry name" value="Probable beta-glucosidase"/>
    <property type="match status" value="1"/>
</dbReference>
<dbReference type="Gene3D" id="3.40.50.1700">
    <property type="entry name" value="Glycoside hydrolase family 3 C-terminal domain"/>
    <property type="match status" value="1"/>
</dbReference>
<dbReference type="Gene3D" id="3.20.20.300">
    <property type="entry name" value="Glycoside hydrolase, family 3, N-terminal domain"/>
    <property type="match status" value="1"/>
</dbReference>
<dbReference type="Gene3D" id="2.60.40.10">
    <property type="entry name" value="Immunoglobulins"/>
    <property type="match status" value="1"/>
</dbReference>
<dbReference type="InterPro" id="IPR050288">
    <property type="entry name" value="Cellulose_deg_GH3"/>
</dbReference>
<dbReference type="InterPro" id="IPR026891">
    <property type="entry name" value="Fn3-like"/>
</dbReference>
<dbReference type="InterPro" id="IPR019800">
    <property type="entry name" value="Glyco_hydro_3_AS"/>
</dbReference>
<dbReference type="InterPro" id="IPR002772">
    <property type="entry name" value="Glyco_hydro_3_C"/>
</dbReference>
<dbReference type="InterPro" id="IPR036881">
    <property type="entry name" value="Glyco_hydro_3_C_sf"/>
</dbReference>
<dbReference type="InterPro" id="IPR001764">
    <property type="entry name" value="Glyco_hydro_3_N"/>
</dbReference>
<dbReference type="InterPro" id="IPR036962">
    <property type="entry name" value="Glyco_hydro_3_N_sf"/>
</dbReference>
<dbReference type="InterPro" id="IPR017853">
    <property type="entry name" value="Glycoside_hydrolase_SF"/>
</dbReference>
<dbReference type="InterPro" id="IPR013783">
    <property type="entry name" value="Ig-like_fold"/>
</dbReference>
<dbReference type="PANTHER" id="PTHR42715">
    <property type="entry name" value="BETA-GLUCOSIDASE"/>
    <property type="match status" value="1"/>
</dbReference>
<dbReference type="PANTHER" id="PTHR42715:SF2">
    <property type="entry name" value="BETA-GLUCOSIDASE F-RELATED"/>
    <property type="match status" value="1"/>
</dbReference>
<dbReference type="Pfam" id="PF14310">
    <property type="entry name" value="Fn3-like"/>
    <property type="match status" value="1"/>
</dbReference>
<dbReference type="Pfam" id="PF00933">
    <property type="entry name" value="Glyco_hydro_3"/>
    <property type="match status" value="1"/>
</dbReference>
<dbReference type="Pfam" id="PF01915">
    <property type="entry name" value="Glyco_hydro_3_C"/>
    <property type="match status" value="1"/>
</dbReference>
<dbReference type="PRINTS" id="PR00133">
    <property type="entry name" value="GLHYDRLASE3"/>
</dbReference>
<dbReference type="SMART" id="SM01217">
    <property type="entry name" value="Fn3_like"/>
    <property type="match status" value="1"/>
</dbReference>
<dbReference type="SUPFAM" id="SSF51445">
    <property type="entry name" value="(Trans)glycosidases"/>
    <property type="match status" value="1"/>
</dbReference>
<dbReference type="SUPFAM" id="SSF52279">
    <property type="entry name" value="Beta-D-glucan exohydrolase, C-terminal domain"/>
    <property type="match status" value="1"/>
</dbReference>
<dbReference type="PROSITE" id="PS00775">
    <property type="entry name" value="GLYCOSYL_HYDROL_F3"/>
    <property type="match status" value="1"/>
</dbReference>
<accession>Q5B6C6</accession>
<accession>C8V6A2</accession>
<protein>
    <recommendedName>
        <fullName>Probable beta-glucosidase F</fullName>
        <ecNumber>3.2.1.21</ecNumber>
    </recommendedName>
    <alternativeName>
        <fullName>Beta-D-glucoside glucohydrolase F</fullName>
    </alternativeName>
    <alternativeName>
        <fullName>Cellobiase F</fullName>
    </alternativeName>
    <alternativeName>
        <fullName>Gentiobiase F</fullName>
    </alternativeName>
</protein>
<name>BGLF_EMENI</name>
<comment type="function">
    <text evidence="1">Beta-glucosidases are one of a number of cellulolytic enzymes involved in the degradation of cellulosic biomass. Catalyzes the last step releasing glucose from the inhibitory cellobiose (By similarity).</text>
</comment>
<comment type="catalytic activity">
    <reaction>
        <text>Hydrolysis of terminal, non-reducing beta-D-glucosyl residues with release of beta-D-glucose.</text>
        <dbReference type="EC" id="3.2.1.21"/>
    </reaction>
</comment>
<comment type="pathway">
    <text>Glycan metabolism; cellulose degradation.</text>
</comment>
<comment type="subcellular location">
    <subcellularLocation>
        <location evidence="1">Secreted</location>
    </subcellularLocation>
</comment>
<comment type="similarity">
    <text evidence="4">Belongs to the glycosyl hydrolase 3 family.</text>
</comment>
<comment type="sequence caution" evidence="4">
    <conflict type="erroneous gene model prediction">
        <sequence resource="EMBL-CDS" id="EAA58835"/>
    </conflict>
</comment>
<evidence type="ECO:0000250" key="1"/>
<evidence type="ECO:0000255" key="2"/>
<evidence type="ECO:0000256" key="3">
    <source>
        <dbReference type="SAM" id="MobiDB-lite"/>
    </source>
</evidence>
<evidence type="ECO:0000305" key="4"/>
<keyword id="KW-0119">Carbohydrate metabolism</keyword>
<keyword id="KW-0136">Cellulose degradation</keyword>
<keyword id="KW-0325">Glycoprotein</keyword>
<keyword id="KW-0326">Glycosidase</keyword>
<keyword id="KW-0378">Hydrolase</keyword>
<keyword id="KW-0624">Polysaccharide degradation</keyword>
<keyword id="KW-1185">Reference proteome</keyword>
<keyword id="KW-0964">Secreted</keyword>
<keyword id="KW-0732">Signal</keyword>
<reference key="1">
    <citation type="journal article" date="2005" name="Nature">
        <title>Sequencing of Aspergillus nidulans and comparative analysis with A. fumigatus and A. oryzae.</title>
        <authorList>
            <person name="Galagan J.E."/>
            <person name="Calvo S.E."/>
            <person name="Cuomo C."/>
            <person name="Ma L.-J."/>
            <person name="Wortman J.R."/>
            <person name="Batzoglou S."/>
            <person name="Lee S.-I."/>
            <person name="Bastuerkmen M."/>
            <person name="Spevak C.C."/>
            <person name="Clutterbuck J."/>
            <person name="Kapitonov V."/>
            <person name="Jurka J."/>
            <person name="Scazzocchio C."/>
            <person name="Farman M.L."/>
            <person name="Butler J."/>
            <person name="Purcell S."/>
            <person name="Harris S."/>
            <person name="Braus G.H."/>
            <person name="Draht O."/>
            <person name="Busch S."/>
            <person name="D'Enfert C."/>
            <person name="Bouchier C."/>
            <person name="Goldman G.H."/>
            <person name="Bell-Pedersen D."/>
            <person name="Griffiths-Jones S."/>
            <person name="Doonan J.H."/>
            <person name="Yu J."/>
            <person name="Vienken K."/>
            <person name="Pain A."/>
            <person name="Freitag M."/>
            <person name="Selker E.U."/>
            <person name="Archer D.B."/>
            <person name="Penalva M.A."/>
            <person name="Oakley B.R."/>
            <person name="Momany M."/>
            <person name="Tanaka T."/>
            <person name="Kumagai T."/>
            <person name="Asai K."/>
            <person name="Machida M."/>
            <person name="Nierman W.C."/>
            <person name="Denning D.W."/>
            <person name="Caddick M.X."/>
            <person name="Hynes M."/>
            <person name="Paoletti M."/>
            <person name="Fischer R."/>
            <person name="Miller B.L."/>
            <person name="Dyer P.S."/>
            <person name="Sachs M.S."/>
            <person name="Osmani S.A."/>
            <person name="Birren B.W."/>
        </authorList>
    </citation>
    <scope>NUCLEOTIDE SEQUENCE [LARGE SCALE GENOMIC DNA]</scope>
    <source>
        <strain>FGSC A4 / ATCC 38163 / CBS 112.46 / NRRL 194 / M139</strain>
    </source>
</reference>
<reference key="2">
    <citation type="journal article" date="2009" name="Fungal Genet. Biol.">
        <title>The 2008 update of the Aspergillus nidulans genome annotation: a community effort.</title>
        <authorList>
            <person name="Wortman J.R."/>
            <person name="Gilsenan J.M."/>
            <person name="Joardar V."/>
            <person name="Deegan J."/>
            <person name="Clutterbuck J."/>
            <person name="Andersen M.R."/>
            <person name="Archer D."/>
            <person name="Bencina M."/>
            <person name="Braus G."/>
            <person name="Coutinho P."/>
            <person name="von Dohren H."/>
            <person name="Doonan J."/>
            <person name="Driessen A.J."/>
            <person name="Durek P."/>
            <person name="Espeso E."/>
            <person name="Fekete E."/>
            <person name="Flipphi M."/>
            <person name="Estrada C.G."/>
            <person name="Geysens S."/>
            <person name="Goldman G."/>
            <person name="de Groot P.W."/>
            <person name="Hansen K."/>
            <person name="Harris S.D."/>
            <person name="Heinekamp T."/>
            <person name="Helmstaedt K."/>
            <person name="Henrissat B."/>
            <person name="Hofmann G."/>
            <person name="Homan T."/>
            <person name="Horio T."/>
            <person name="Horiuchi H."/>
            <person name="James S."/>
            <person name="Jones M."/>
            <person name="Karaffa L."/>
            <person name="Karanyi Z."/>
            <person name="Kato M."/>
            <person name="Keller N."/>
            <person name="Kelly D.E."/>
            <person name="Kiel J.A."/>
            <person name="Kim J.M."/>
            <person name="van der Klei I.J."/>
            <person name="Klis F.M."/>
            <person name="Kovalchuk A."/>
            <person name="Krasevec N."/>
            <person name="Kubicek C.P."/>
            <person name="Liu B."/>
            <person name="Maccabe A."/>
            <person name="Meyer V."/>
            <person name="Mirabito P."/>
            <person name="Miskei M."/>
            <person name="Mos M."/>
            <person name="Mullins J."/>
            <person name="Nelson D.R."/>
            <person name="Nielsen J."/>
            <person name="Oakley B.R."/>
            <person name="Osmani S.A."/>
            <person name="Pakula T."/>
            <person name="Paszewski A."/>
            <person name="Paulsen I."/>
            <person name="Pilsyk S."/>
            <person name="Pocsi I."/>
            <person name="Punt P.J."/>
            <person name="Ram A.F."/>
            <person name="Ren Q."/>
            <person name="Robellet X."/>
            <person name="Robson G."/>
            <person name="Seiboth B."/>
            <person name="van Solingen P."/>
            <person name="Specht T."/>
            <person name="Sun J."/>
            <person name="Taheri-Talesh N."/>
            <person name="Takeshita N."/>
            <person name="Ussery D."/>
            <person name="vanKuyk P.A."/>
            <person name="Visser H."/>
            <person name="van de Vondervoort P.J."/>
            <person name="de Vries R.P."/>
            <person name="Walton J."/>
            <person name="Xiang X."/>
            <person name="Xiong Y."/>
            <person name="Zeng A.P."/>
            <person name="Brandt B.W."/>
            <person name="Cornell M.J."/>
            <person name="van den Hondel C.A."/>
            <person name="Visser J."/>
            <person name="Oliver S.G."/>
            <person name="Turner G."/>
        </authorList>
    </citation>
    <scope>GENOME REANNOTATION</scope>
    <source>
        <strain>FGSC A4 / ATCC 38163 / CBS 112.46 / NRRL 194 / M139</strain>
    </source>
</reference>
<proteinExistence type="inferred from homology"/>
<feature type="signal peptide" evidence="2">
    <location>
        <begin position="1"/>
        <end position="20"/>
    </location>
</feature>
<feature type="chain" id="PRO_0000394114" description="Probable beta-glucosidase F">
    <location>
        <begin position="21"/>
        <end position="868"/>
    </location>
</feature>
<feature type="region of interest" description="Disordered" evidence="3">
    <location>
        <begin position="21"/>
        <end position="40"/>
    </location>
</feature>
<feature type="region of interest" description="Disordered" evidence="3">
    <location>
        <begin position="731"/>
        <end position="752"/>
    </location>
</feature>
<feature type="active site" evidence="1">
    <location>
        <position position="285"/>
    </location>
</feature>
<feature type="glycosylation site" description="N-linked (GlcNAc...) asparagine" evidence="2">
    <location>
        <position position="65"/>
    </location>
</feature>
<feature type="glycosylation site" description="N-linked (GlcNAc...) asparagine" evidence="2">
    <location>
        <position position="73"/>
    </location>
</feature>
<feature type="glycosylation site" description="N-linked (GlcNAc...) asparagine" evidence="2">
    <location>
        <position position="257"/>
    </location>
</feature>
<feature type="glycosylation site" description="N-linked (GlcNAc...) asparagine" evidence="2">
    <location>
        <position position="328"/>
    </location>
</feature>
<feature type="glycosylation site" description="N-linked (GlcNAc...) asparagine" evidence="2">
    <location>
        <position position="360"/>
    </location>
</feature>
<feature type="glycosylation site" description="N-linked (GlcNAc...) asparagine" evidence="2">
    <location>
        <position position="395"/>
    </location>
</feature>
<feature type="glycosylation site" description="N-linked (GlcNAc...) asparagine" evidence="2">
    <location>
        <position position="421"/>
    </location>
</feature>
<feature type="glycosylation site" description="N-linked (GlcNAc...) asparagine" evidence="2">
    <location>
        <position position="726"/>
    </location>
</feature>